<evidence type="ECO:0000255" key="1">
    <source>
        <dbReference type="HAMAP-Rule" id="MF_01516"/>
    </source>
</evidence>
<feature type="chain" id="PRO_0000294295" description="Malate dehydrogenase">
    <location>
        <begin position="1"/>
        <end position="312"/>
    </location>
</feature>
<feature type="active site" description="Proton acceptor" evidence="1">
    <location>
        <position position="177"/>
    </location>
</feature>
<feature type="binding site" evidence="1">
    <location>
        <begin position="7"/>
        <end position="13"/>
    </location>
    <ligand>
        <name>NAD(+)</name>
        <dbReference type="ChEBI" id="CHEBI:57540"/>
    </ligand>
</feature>
<feature type="binding site" evidence="1">
    <location>
        <position position="34"/>
    </location>
    <ligand>
        <name>NAD(+)</name>
        <dbReference type="ChEBI" id="CHEBI:57540"/>
    </ligand>
</feature>
<feature type="binding site" evidence="1">
    <location>
        <position position="81"/>
    </location>
    <ligand>
        <name>substrate</name>
    </ligand>
</feature>
<feature type="binding site" evidence="1">
    <location>
        <position position="87"/>
    </location>
    <ligand>
        <name>substrate</name>
    </ligand>
</feature>
<feature type="binding site" evidence="1">
    <location>
        <position position="94"/>
    </location>
    <ligand>
        <name>NAD(+)</name>
        <dbReference type="ChEBI" id="CHEBI:57540"/>
    </ligand>
</feature>
<feature type="binding site" evidence="1">
    <location>
        <begin position="117"/>
        <end position="119"/>
    </location>
    <ligand>
        <name>NAD(+)</name>
        <dbReference type="ChEBI" id="CHEBI:57540"/>
    </ligand>
</feature>
<feature type="binding site" evidence="1">
    <location>
        <position position="119"/>
    </location>
    <ligand>
        <name>substrate</name>
    </ligand>
</feature>
<feature type="binding site" evidence="1">
    <location>
        <position position="153"/>
    </location>
    <ligand>
        <name>substrate</name>
    </ligand>
</feature>
<feature type="binding site" evidence="1">
    <location>
        <position position="227"/>
    </location>
    <ligand>
        <name>NAD(+)</name>
        <dbReference type="ChEBI" id="CHEBI:57540"/>
    </ligand>
</feature>
<accession>Q0TCN0</accession>
<name>MDH_ECOL5</name>
<keyword id="KW-0520">NAD</keyword>
<keyword id="KW-0560">Oxidoreductase</keyword>
<keyword id="KW-0816">Tricarboxylic acid cycle</keyword>
<reference key="1">
    <citation type="journal article" date="2006" name="Mol. Microbiol.">
        <title>Role of pathogenicity island-associated integrases in the genome plasticity of uropathogenic Escherichia coli strain 536.</title>
        <authorList>
            <person name="Hochhut B."/>
            <person name="Wilde C."/>
            <person name="Balling G."/>
            <person name="Middendorf B."/>
            <person name="Dobrindt U."/>
            <person name="Brzuszkiewicz E."/>
            <person name="Gottschalk G."/>
            <person name="Carniel E."/>
            <person name="Hacker J."/>
        </authorList>
    </citation>
    <scope>NUCLEOTIDE SEQUENCE [LARGE SCALE GENOMIC DNA]</scope>
    <source>
        <strain>536 / UPEC</strain>
    </source>
</reference>
<protein>
    <recommendedName>
        <fullName evidence="1">Malate dehydrogenase</fullName>
        <ecNumber evidence="1">1.1.1.37</ecNumber>
    </recommendedName>
</protein>
<dbReference type="EC" id="1.1.1.37" evidence="1"/>
<dbReference type="EMBL" id="CP000247">
    <property type="protein sequence ID" value="ABG71299.1"/>
    <property type="molecule type" value="Genomic_DNA"/>
</dbReference>
<dbReference type="RefSeq" id="WP_001298585.1">
    <property type="nucleotide sequence ID" value="NC_008253.1"/>
</dbReference>
<dbReference type="SMR" id="Q0TCN0"/>
<dbReference type="KEGG" id="ecp:ECP_3319"/>
<dbReference type="HOGENOM" id="CLU_047181_0_1_6"/>
<dbReference type="Proteomes" id="UP000009182">
    <property type="component" value="Chromosome"/>
</dbReference>
<dbReference type="GO" id="GO:0005737">
    <property type="term" value="C:cytoplasm"/>
    <property type="evidence" value="ECO:0007669"/>
    <property type="project" value="TreeGrafter"/>
</dbReference>
<dbReference type="GO" id="GO:0030060">
    <property type="term" value="F:L-malate dehydrogenase (NAD+) activity"/>
    <property type="evidence" value="ECO:0007669"/>
    <property type="project" value="UniProtKB-UniRule"/>
</dbReference>
<dbReference type="GO" id="GO:0006108">
    <property type="term" value="P:malate metabolic process"/>
    <property type="evidence" value="ECO:0007669"/>
    <property type="project" value="InterPro"/>
</dbReference>
<dbReference type="GO" id="GO:0006099">
    <property type="term" value="P:tricarboxylic acid cycle"/>
    <property type="evidence" value="ECO:0007669"/>
    <property type="project" value="UniProtKB-UniRule"/>
</dbReference>
<dbReference type="CDD" id="cd01337">
    <property type="entry name" value="MDH_glyoxysomal_mitochondrial"/>
    <property type="match status" value="1"/>
</dbReference>
<dbReference type="FunFam" id="3.40.50.720:FF:000017">
    <property type="entry name" value="Malate dehydrogenase"/>
    <property type="match status" value="1"/>
</dbReference>
<dbReference type="FunFam" id="3.90.110.10:FF:000001">
    <property type="entry name" value="Malate dehydrogenase"/>
    <property type="match status" value="1"/>
</dbReference>
<dbReference type="Gene3D" id="3.90.110.10">
    <property type="entry name" value="Lactate dehydrogenase/glycoside hydrolase, family 4, C-terminal"/>
    <property type="match status" value="1"/>
</dbReference>
<dbReference type="Gene3D" id="3.40.50.720">
    <property type="entry name" value="NAD(P)-binding Rossmann-like Domain"/>
    <property type="match status" value="1"/>
</dbReference>
<dbReference type="HAMAP" id="MF_01516">
    <property type="entry name" value="Malate_dehydrog_1"/>
    <property type="match status" value="1"/>
</dbReference>
<dbReference type="InterPro" id="IPR001557">
    <property type="entry name" value="L-lactate/malate_DH"/>
</dbReference>
<dbReference type="InterPro" id="IPR022383">
    <property type="entry name" value="Lactate/malate_DH_C"/>
</dbReference>
<dbReference type="InterPro" id="IPR001236">
    <property type="entry name" value="Lactate/malate_DH_N"/>
</dbReference>
<dbReference type="InterPro" id="IPR015955">
    <property type="entry name" value="Lactate_DH/Glyco_Ohase_4_C"/>
</dbReference>
<dbReference type="InterPro" id="IPR001252">
    <property type="entry name" value="Malate_DH_AS"/>
</dbReference>
<dbReference type="InterPro" id="IPR010097">
    <property type="entry name" value="Malate_DH_type1"/>
</dbReference>
<dbReference type="InterPro" id="IPR023958">
    <property type="entry name" value="Malate_DH_type1_bac"/>
</dbReference>
<dbReference type="InterPro" id="IPR036291">
    <property type="entry name" value="NAD(P)-bd_dom_sf"/>
</dbReference>
<dbReference type="NCBIfam" id="TIGR01772">
    <property type="entry name" value="MDH_euk_gproteo"/>
    <property type="match status" value="1"/>
</dbReference>
<dbReference type="PANTHER" id="PTHR11540">
    <property type="entry name" value="MALATE AND LACTATE DEHYDROGENASE"/>
    <property type="match status" value="1"/>
</dbReference>
<dbReference type="PANTHER" id="PTHR11540:SF16">
    <property type="entry name" value="MALATE DEHYDROGENASE, MITOCHONDRIAL"/>
    <property type="match status" value="1"/>
</dbReference>
<dbReference type="Pfam" id="PF02866">
    <property type="entry name" value="Ldh_1_C"/>
    <property type="match status" value="1"/>
</dbReference>
<dbReference type="Pfam" id="PF00056">
    <property type="entry name" value="Ldh_1_N"/>
    <property type="match status" value="1"/>
</dbReference>
<dbReference type="PIRSF" id="PIRSF000102">
    <property type="entry name" value="Lac_mal_DH"/>
    <property type="match status" value="1"/>
</dbReference>
<dbReference type="SUPFAM" id="SSF56327">
    <property type="entry name" value="LDH C-terminal domain-like"/>
    <property type="match status" value="1"/>
</dbReference>
<dbReference type="SUPFAM" id="SSF51735">
    <property type="entry name" value="NAD(P)-binding Rossmann-fold domains"/>
    <property type="match status" value="1"/>
</dbReference>
<dbReference type="PROSITE" id="PS00068">
    <property type="entry name" value="MDH"/>
    <property type="match status" value="1"/>
</dbReference>
<sequence>MKVAVLGAAGGIGQALALLLKTQLPSGSELSLYDIAPVTPGVAVDLSHIPTAVKIKGFSGEDATPALEGADVVLISAGVARKPGMDRSDLFNVNAGIVKNLVQQVAKTCPKACIGIITNPVNTTVAIAAEVLKKAGVYDKNKLFGVTTLDIIRSNTFVAELKGKQPGEVEVPVIGGHSGVTILPLLSQVPGVSFTEQEVADLTKRIQNAGTEVVEAKAGGGSATLSMGQAAARFGLSLVRALQGEQGVIECAYVEGDGQYARFFSQPLLLGKNGVEERKSIGTLSAFEQNALEGMLDTLKKDIALGEEFVNK</sequence>
<comment type="function">
    <text evidence="1">Catalyzes the reversible oxidation of malate to oxaloacetate.</text>
</comment>
<comment type="catalytic activity">
    <reaction evidence="1">
        <text>(S)-malate + NAD(+) = oxaloacetate + NADH + H(+)</text>
        <dbReference type="Rhea" id="RHEA:21432"/>
        <dbReference type="ChEBI" id="CHEBI:15378"/>
        <dbReference type="ChEBI" id="CHEBI:15589"/>
        <dbReference type="ChEBI" id="CHEBI:16452"/>
        <dbReference type="ChEBI" id="CHEBI:57540"/>
        <dbReference type="ChEBI" id="CHEBI:57945"/>
        <dbReference type="EC" id="1.1.1.37"/>
    </reaction>
</comment>
<comment type="subunit">
    <text evidence="1">Homodimer.</text>
</comment>
<comment type="similarity">
    <text evidence="1">Belongs to the LDH/MDH superfamily. MDH type 1 family.</text>
</comment>
<organism>
    <name type="scientific">Escherichia coli O6:K15:H31 (strain 536 / UPEC)</name>
    <dbReference type="NCBI Taxonomy" id="362663"/>
    <lineage>
        <taxon>Bacteria</taxon>
        <taxon>Pseudomonadati</taxon>
        <taxon>Pseudomonadota</taxon>
        <taxon>Gammaproteobacteria</taxon>
        <taxon>Enterobacterales</taxon>
        <taxon>Enterobacteriaceae</taxon>
        <taxon>Escherichia</taxon>
    </lineage>
</organism>
<proteinExistence type="inferred from homology"/>
<gene>
    <name evidence="1" type="primary">mdh</name>
    <name type="ordered locus">ECP_3319</name>
</gene>